<dbReference type="EMBL" id="CU329670">
    <property type="protein sequence ID" value="CAA94624.1"/>
    <property type="molecule type" value="Genomic_DNA"/>
</dbReference>
<dbReference type="EMBL" id="AB027811">
    <property type="protein sequence ID" value="BAA87115.1"/>
    <property type="molecule type" value="Genomic_DNA"/>
</dbReference>
<dbReference type="PIR" id="T38077">
    <property type="entry name" value="T38077"/>
</dbReference>
<dbReference type="RefSeq" id="NP_593009.1">
    <property type="nucleotide sequence ID" value="NM_001018408.2"/>
</dbReference>
<dbReference type="SMR" id="Q10411"/>
<dbReference type="BioGRID" id="278145">
    <property type="interactions" value="21"/>
</dbReference>
<dbReference type="STRING" id="284812.Q10411"/>
<dbReference type="iPTMnet" id="Q10411"/>
<dbReference type="PaxDb" id="4896-SPAC1F3.06c.1"/>
<dbReference type="EnsemblFungi" id="SPAC1F3.06c.1">
    <property type="protein sequence ID" value="SPAC1F3.06c.1:pep"/>
    <property type="gene ID" value="SPAC1F3.06c"/>
</dbReference>
<dbReference type="GeneID" id="2541649"/>
<dbReference type="KEGG" id="spo:2541649"/>
<dbReference type="PomBase" id="SPAC1F3.06c">
    <property type="gene designation" value="spo15"/>
</dbReference>
<dbReference type="VEuPathDB" id="FungiDB:SPAC1F3.06c"/>
<dbReference type="eggNOG" id="KOG4674">
    <property type="taxonomic scope" value="Eukaryota"/>
</dbReference>
<dbReference type="HOGENOM" id="CLU_234945_0_0_1"/>
<dbReference type="InParanoid" id="Q10411"/>
<dbReference type="OMA" id="INDQYHT"/>
<dbReference type="PhylomeDB" id="Q10411"/>
<dbReference type="CD-CODE" id="576F0A76">
    <property type="entry name" value="Centrosome"/>
</dbReference>
<dbReference type="PRO" id="PR:Q10411"/>
<dbReference type="Proteomes" id="UP000002485">
    <property type="component" value="Chromosome I"/>
</dbReference>
<dbReference type="GO" id="GO:0005737">
    <property type="term" value="C:cytoplasm"/>
    <property type="evidence" value="ECO:0007669"/>
    <property type="project" value="UniProtKB-KW"/>
</dbReference>
<dbReference type="GO" id="GO:0035974">
    <property type="term" value="C:meiotic spindle pole body"/>
    <property type="evidence" value="ECO:0000314"/>
    <property type="project" value="PomBase"/>
</dbReference>
<dbReference type="GO" id="GO:0044732">
    <property type="term" value="C:mitotic spindle pole body"/>
    <property type="evidence" value="ECO:0000314"/>
    <property type="project" value="PomBase"/>
</dbReference>
<dbReference type="GO" id="GO:0031322">
    <property type="term" value="P:ascospore-type prospore-specific spindle pole body remodeling"/>
    <property type="evidence" value="ECO:0000315"/>
    <property type="project" value="PomBase"/>
</dbReference>
<dbReference type="Gene3D" id="1.10.287.1490">
    <property type="match status" value="2"/>
</dbReference>
<dbReference type="PANTHER" id="PTHR23159">
    <property type="entry name" value="CENTROSOMAL PROTEIN 2"/>
    <property type="match status" value="1"/>
</dbReference>
<dbReference type="PANTHER" id="PTHR23159:SF31">
    <property type="entry name" value="CENTROSOME-ASSOCIATED PROTEIN CEP250 ISOFORM X1"/>
    <property type="match status" value="1"/>
</dbReference>
<dbReference type="SUPFAM" id="SSF57997">
    <property type="entry name" value="Tropomyosin"/>
    <property type="match status" value="2"/>
</dbReference>
<evidence type="ECO:0000255" key="1"/>
<evidence type="ECO:0000256" key="2">
    <source>
        <dbReference type="SAM" id="MobiDB-lite"/>
    </source>
</evidence>
<evidence type="ECO:0000269" key="3">
    <source>
    </source>
</evidence>
<evidence type="ECO:0000269" key="4">
    <source>
    </source>
</evidence>
<evidence type="ECO:0000269" key="5">
    <source>
    </source>
</evidence>
<evidence type="ECO:0000305" key="6"/>
<protein>
    <recommendedName>
        <fullName>Sporulation-specific protein 15</fullName>
    </recommendedName>
</protein>
<sequence length="1957" mass="222787">MSNQSSSGSNTSDLDEESASSLVSSAASPFIDSDLETPRPNISRASTGQLAEDGDTSSQHEDSSEELKRQEVRGMRRHSDLSIDAKLGSSEGSTASSALPLTPRSPSNASWLLVRGGLLDSPILDINSVTQKSNLLNELKQVRSKLAALEHENGILSLQLSSSNKKDKNTSSVTTLTSEEDVSYFQKKLTNMESNFSAKQSEAYDLSRQLLTVTEKLDKKEKDYEKIKEDVSSIKASLAEEQASNKSLRGEQERLEKLLVSSNKTVSTLRQTENSLRAECKTLQEKLEKCAINEEDSKLLEELKHNVANYSDAIVHKDKLIEDLSTRISEFDNLKSERDTLSIKNEKLEKLLRNTIGSLKDSRTSNSQLEEEMVELKESNRTIHSQLTDAESKLSSFEQENKSLKGSIDEYQNNLSSKDKMVKQVSSQLEEARSSLAHATGKLAEINSERDFQNKKIKDFEKIEQDLRACLNSSSNELKEKSALIDKKDQELNNLREQIKEQKKVSESTQSSLQSLQRDILNEKKKHEVYESQLNELKGELQTEISNSEHLSSQLSTLAAEKEAAVATNNELSESKNSLQTLCNAFQEKLAKSVMQLKENEQNFSSLDTSFKKLNESHQELENNHQTITKQLKDTSSKLQQLQLERANFEQKESTLSDENNDLRTKLLKLEESNKSLIKKQEDVDSLEKNIQTLKEDLRKSEEALRFSKLEAKNLREVIDNLKGKHETLEAQRNDLHSSLSDAKNTNAILSSELTKSSEDVKRLTANVETLTQDSKAMKQSFTSLVNSYQSISNLYHELRDDHVNMQSQNNTLLESESKLKTDCENLTQQNMTLIDNVQKLMHKHVNQESKVSELKEVNGKLSLDLKNLRSSLNVAISDNDQILTQLAELSKNYDSLEQESAQLNSGLKSLEAEKQLLHTENEELHIRLDKLTGKLKIEESKSSDLGKKLTARQEEISNLKEENMSQSQAITSVKSKLDETLSKSSKLEADIEHLKNKVSEVEVERNALLASNERLMDDLKNNGENIASLQTEIEKKRAENDDLQSKLSVVSSEYENLLLISSQTNKSLEDKTNQLKYIEKNVQKLLDEKDQRNVELEELTSKYGKLGEENAQIKDELLALRKKSKKQHDLCANFVDDLKEKSDALEQLTNEKNELIVSLEQSNSNNEALVEERSDLANRLSDMKKSLSDSDNVISVIRSDLVRVNDELDTLKKDKDSLSTQYSEVCQDRDDLLDSLKGCEESFNKYAVSLRELCTKSEIDVPVSEILDDNFVFNAGNFSELSRLTVLSLENYLDAFNQVNFKKMELDNRLTTTDAEFTKVVADLEKLQHEHDDWLIQRGDLEKALKDSEKNFLRKEAEMTENIHSLEEGKEETKKEIAELSSRLEDNQLATNKLKNQLDHLNQEIRLKEDVLKEKESLIISLEESLSNQRQKESSLLDAKNELEHMLDDTSRKNSSLMEKIESINSSLDDKSFELASAVEKLGALQKLHSESLSLMENIKSQLQEAKEKIQVDESTIQELDHEITASKNNYEGKLNDKDSIIRDLSENIEQLNNLLAEEKSAVKRLSTEKESEILQFNSRLADLEYHKSQVESELGRSKLKLASTTEELQLAENERLSLTTRMLDLQNQVKDLSNIKDSLSEDLRTLRSLEDSVASLQKECKIKSNTVESLQDVLTSVQARNAELEDEVSRSVDKIRRRDDRCEHLSGKLKKLHSQLEEQHETFFRAEQQRMTQLGFLKETVKKQEKLLKKLNLRQEQLIPRSSILVYESYIRDIEKEIIVLQERLNGIELSQQLPKGYFGYFFKTNRVEMEVLDSFKQQVAKLQFLAGAEFIVKFKEDLEKCAAEEKEKQATFDNYSEKVENLGKSIEALYFALNREISFRKSLALSKSAYHNLLVRDSPKFNPDSQITYSIPVTNTKQSLLRSAILCVISLQRLRLLGQRHSFCEEVIENLSCV</sequence>
<proteinExistence type="evidence at protein level"/>
<organism>
    <name type="scientific">Schizosaccharomyces pombe (strain 972 / ATCC 24843)</name>
    <name type="common">Fission yeast</name>
    <dbReference type="NCBI Taxonomy" id="284812"/>
    <lineage>
        <taxon>Eukaryota</taxon>
        <taxon>Fungi</taxon>
        <taxon>Dikarya</taxon>
        <taxon>Ascomycota</taxon>
        <taxon>Taphrinomycotina</taxon>
        <taxon>Schizosaccharomycetes</taxon>
        <taxon>Schizosaccharomycetales</taxon>
        <taxon>Schizosaccharomycetaceae</taxon>
        <taxon>Schizosaccharomyces</taxon>
    </lineage>
</organism>
<reference key="1">
    <citation type="journal article" date="2000" name="J. Cell Sci.">
        <title>S. pombe sporulation-specific coiled-coil protein Spo15p is localized to the spindle pole body and essential for its modification.</title>
        <authorList>
            <person name="Ikemoto S."/>
            <person name="Nakamura T."/>
            <person name="Kubo M."/>
            <person name="Shimoda C."/>
        </authorList>
    </citation>
    <scope>NUCLEOTIDE SEQUENCE [GENOMIC DNA]</scope>
    <scope>FUNCTION</scope>
    <scope>SUBUNIT</scope>
    <scope>SUBCELLULAR LOCATION</scope>
</reference>
<reference key="2">
    <citation type="journal article" date="2002" name="Nature">
        <title>The genome sequence of Schizosaccharomyces pombe.</title>
        <authorList>
            <person name="Wood V."/>
            <person name="Gwilliam R."/>
            <person name="Rajandream M.A."/>
            <person name="Lyne M.H."/>
            <person name="Lyne R."/>
            <person name="Stewart A."/>
            <person name="Sgouros J.G."/>
            <person name="Peat N."/>
            <person name="Hayles J."/>
            <person name="Baker S.G."/>
            <person name="Basham D."/>
            <person name="Bowman S."/>
            <person name="Brooks K."/>
            <person name="Brown D."/>
            <person name="Brown S."/>
            <person name="Chillingworth T."/>
            <person name="Churcher C.M."/>
            <person name="Collins M."/>
            <person name="Connor R."/>
            <person name="Cronin A."/>
            <person name="Davis P."/>
            <person name="Feltwell T."/>
            <person name="Fraser A."/>
            <person name="Gentles S."/>
            <person name="Goble A."/>
            <person name="Hamlin N."/>
            <person name="Harris D.E."/>
            <person name="Hidalgo J."/>
            <person name="Hodgson G."/>
            <person name="Holroyd S."/>
            <person name="Hornsby T."/>
            <person name="Howarth S."/>
            <person name="Huckle E.J."/>
            <person name="Hunt S."/>
            <person name="Jagels K."/>
            <person name="James K.D."/>
            <person name="Jones L."/>
            <person name="Jones M."/>
            <person name="Leather S."/>
            <person name="McDonald S."/>
            <person name="McLean J."/>
            <person name="Mooney P."/>
            <person name="Moule S."/>
            <person name="Mungall K.L."/>
            <person name="Murphy L.D."/>
            <person name="Niblett D."/>
            <person name="Odell C."/>
            <person name="Oliver K."/>
            <person name="O'Neil S."/>
            <person name="Pearson D."/>
            <person name="Quail M.A."/>
            <person name="Rabbinowitsch E."/>
            <person name="Rutherford K.M."/>
            <person name="Rutter S."/>
            <person name="Saunders D."/>
            <person name="Seeger K."/>
            <person name="Sharp S."/>
            <person name="Skelton J."/>
            <person name="Simmonds M.N."/>
            <person name="Squares R."/>
            <person name="Squares S."/>
            <person name="Stevens K."/>
            <person name="Taylor K."/>
            <person name="Taylor R.G."/>
            <person name="Tivey A."/>
            <person name="Walsh S.V."/>
            <person name="Warren T."/>
            <person name="Whitehead S."/>
            <person name="Woodward J.R."/>
            <person name="Volckaert G."/>
            <person name="Aert R."/>
            <person name="Robben J."/>
            <person name="Grymonprez B."/>
            <person name="Weltjens I."/>
            <person name="Vanstreels E."/>
            <person name="Rieger M."/>
            <person name="Schaefer M."/>
            <person name="Mueller-Auer S."/>
            <person name="Gabel C."/>
            <person name="Fuchs M."/>
            <person name="Duesterhoeft A."/>
            <person name="Fritzc C."/>
            <person name="Holzer E."/>
            <person name="Moestl D."/>
            <person name="Hilbert H."/>
            <person name="Borzym K."/>
            <person name="Langer I."/>
            <person name="Beck A."/>
            <person name="Lehrach H."/>
            <person name="Reinhardt R."/>
            <person name="Pohl T.M."/>
            <person name="Eger P."/>
            <person name="Zimmermann W."/>
            <person name="Wedler H."/>
            <person name="Wambutt R."/>
            <person name="Purnelle B."/>
            <person name="Goffeau A."/>
            <person name="Cadieu E."/>
            <person name="Dreano S."/>
            <person name="Gloux S."/>
            <person name="Lelaure V."/>
            <person name="Mottier S."/>
            <person name="Galibert F."/>
            <person name="Aves S.J."/>
            <person name="Xiang Z."/>
            <person name="Hunt C."/>
            <person name="Moore K."/>
            <person name="Hurst S.M."/>
            <person name="Lucas M."/>
            <person name="Rochet M."/>
            <person name="Gaillardin C."/>
            <person name="Tallada V.A."/>
            <person name="Garzon A."/>
            <person name="Thode G."/>
            <person name="Daga R.R."/>
            <person name="Cruzado L."/>
            <person name="Jimenez J."/>
            <person name="Sanchez M."/>
            <person name="del Rey F."/>
            <person name="Benito J."/>
            <person name="Dominguez A."/>
            <person name="Revuelta J.L."/>
            <person name="Moreno S."/>
            <person name="Armstrong J."/>
            <person name="Forsburg S.L."/>
            <person name="Cerutti L."/>
            <person name="Lowe T."/>
            <person name="McCombie W.R."/>
            <person name="Paulsen I."/>
            <person name="Potashkin J."/>
            <person name="Shpakovski G.V."/>
            <person name="Ussery D."/>
            <person name="Barrell B.G."/>
            <person name="Nurse P."/>
        </authorList>
    </citation>
    <scope>NUCLEOTIDE SEQUENCE [LARGE SCALE GENOMIC DNA]</scope>
    <source>
        <strain>972 / ATCC 24843</strain>
    </source>
</reference>
<reference key="3">
    <citation type="journal article" date="2000" name="Genes Cells">
        <title>Large-scale screening of intracellular protein localization in living fission yeast cells by the use of a GFP-fusion genomic DNA library.</title>
        <authorList>
            <person name="Ding D.-Q."/>
            <person name="Tomita Y."/>
            <person name="Yamamoto A."/>
            <person name="Chikashige Y."/>
            <person name="Haraguchi T."/>
            <person name="Hiraoka Y."/>
        </authorList>
    </citation>
    <scope>NUCLEOTIDE SEQUENCE [LARGE SCALE GENOMIC DNA] OF 705-871</scope>
    <source>
        <strain>ATCC 38364 / 968</strain>
    </source>
</reference>
<reference key="4">
    <citation type="journal article" date="2005" name="J. Cell Sci.">
        <title>Mcp6, a meiosis-specific coiled-coil protein of Schizosaccharomyces pombe, localizes to the spindle pole body and is required for horsetail movement and recombination.</title>
        <authorList>
            <person name="Saito T.T."/>
            <person name="Tougan T."/>
            <person name="Okuzaki D."/>
            <person name="Kasama T."/>
            <person name="Nojima H."/>
        </authorList>
    </citation>
    <scope>SUBCELLULAR LOCATION</scope>
</reference>
<reference key="5">
    <citation type="journal article" date="2008" name="J. Proteome Res.">
        <title>Phosphoproteome analysis of fission yeast.</title>
        <authorList>
            <person name="Wilson-Grady J.T."/>
            <person name="Villen J."/>
            <person name="Gygi S.P."/>
        </authorList>
    </citation>
    <scope>PHOSPHORYLATION [LARGE SCALE ANALYSIS] AT SER-105</scope>
    <scope>IDENTIFICATION BY MASS SPECTROMETRY</scope>
</reference>
<name>SPO15_SCHPO</name>
<gene>
    <name type="primary">spo15</name>
    <name type="ORF">SPAC1F3.06c</name>
</gene>
<feature type="chain" id="PRO_0000072135" description="Sporulation-specific protein 15">
    <location>
        <begin position="1"/>
        <end position="1957"/>
    </location>
</feature>
<feature type="region of interest" description="Disordered" evidence="2">
    <location>
        <begin position="1"/>
        <end position="102"/>
    </location>
</feature>
<feature type="coiled-coil region" evidence="1">
    <location>
        <begin position="199"/>
        <end position="785"/>
    </location>
</feature>
<feature type="coiled-coil region" evidence="1">
    <location>
        <begin position="804"/>
        <end position="1235"/>
    </location>
</feature>
<feature type="coiled-coil region" evidence="1">
    <location>
        <begin position="1320"/>
        <end position="1471"/>
    </location>
</feature>
<feature type="coiled-coil region" evidence="1">
    <location>
        <begin position="1481"/>
        <end position="1723"/>
    </location>
</feature>
<feature type="compositionally biased region" description="Low complexity" evidence="2">
    <location>
        <begin position="1"/>
        <end position="12"/>
    </location>
</feature>
<feature type="compositionally biased region" description="Low complexity" evidence="2">
    <location>
        <begin position="19"/>
        <end position="28"/>
    </location>
</feature>
<feature type="compositionally biased region" description="Basic and acidic residues" evidence="2">
    <location>
        <begin position="58"/>
        <end position="83"/>
    </location>
</feature>
<feature type="compositionally biased region" description="Polar residues" evidence="2">
    <location>
        <begin position="90"/>
        <end position="102"/>
    </location>
</feature>
<feature type="modified residue" description="Phosphoserine" evidence="5">
    <location>
        <position position="105"/>
    </location>
</feature>
<keyword id="KW-0175">Coiled coil</keyword>
<keyword id="KW-0963">Cytoplasm</keyword>
<keyword id="KW-0206">Cytoskeleton</keyword>
<keyword id="KW-0597">Phosphoprotein</keyword>
<keyword id="KW-1185">Reference proteome</keyword>
<keyword id="KW-0749">Sporulation</keyword>
<comment type="function">
    <text evidence="3">Has a role in the initiation of spore membrane formation.</text>
</comment>
<comment type="subunit">
    <text evidence="3">Monomer.</text>
</comment>
<comment type="subcellular location">
    <subcellularLocation>
        <location evidence="3 4">Cytoplasm</location>
        <location evidence="3 4">Cytoskeleton</location>
        <location evidence="3 4">Microtubule organizing center</location>
        <location evidence="3 4">Spindle pole body</location>
    </subcellularLocation>
</comment>
<comment type="similarity">
    <text evidence="6">Belongs to the MPC70 family.</text>
</comment>
<accession>Q10411</accession>
<accession>Q9USE9</accession>